<organism evidence="3">
    <name type="scientific">Seriola quinqueradiata</name>
    <name type="common">Five-ray yellowtail</name>
    <dbReference type="NCBI Taxonomy" id="8161"/>
    <lineage>
        <taxon>Eukaryota</taxon>
        <taxon>Metazoa</taxon>
        <taxon>Chordata</taxon>
        <taxon>Craniata</taxon>
        <taxon>Vertebrata</taxon>
        <taxon>Euteleostomi</taxon>
        <taxon>Actinopterygii</taxon>
        <taxon>Neopterygii</taxon>
        <taxon>Teleostei</taxon>
        <taxon>Neoteleostei</taxon>
        <taxon>Acanthomorphata</taxon>
        <taxon>Carangaria</taxon>
        <taxon>Carangiformes</taxon>
        <taxon>Carangidae</taxon>
        <taxon>Seriola</taxon>
    </lineage>
</organism>
<accession>C0HJT9</accession>
<keyword id="KW-0119">Carbohydrate metabolism</keyword>
<keyword id="KW-0903">Direct protein sequencing</keyword>
<keyword id="KW-1015">Disulfide bond</keyword>
<keyword id="KW-0313">Glucose metabolism</keyword>
<keyword id="KW-0372">Hormone</keyword>
<keyword id="KW-0964">Secreted</keyword>
<evidence type="ECO:0000250" key="1">
    <source>
        <dbReference type="UniProtKB" id="P01317"/>
    </source>
</evidence>
<evidence type="ECO:0000269" key="2">
    <source>
    </source>
</evidence>
<evidence type="ECO:0000303" key="3">
    <source>
    </source>
</evidence>
<evidence type="ECO:0000305" key="4"/>
<protein>
    <recommendedName>
        <fullName evidence="3">Insulin</fullName>
    </recommendedName>
    <component>
        <recommendedName>
            <fullName evidence="3">Insulin B chain</fullName>
        </recommendedName>
    </component>
    <component>
        <recommendedName>
            <fullName evidence="3">Insulin A chain</fullName>
        </recommendedName>
    </component>
</protein>
<dbReference type="SMR" id="C0HJT9"/>
<dbReference type="GO" id="GO:0005615">
    <property type="term" value="C:extracellular space"/>
    <property type="evidence" value="ECO:0007669"/>
    <property type="project" value="TreeGrafter"/>
</dbReference>
<dbReference type="GO" id="GO:0005179">
    <property type="term" value="F:hormone activity"/>
    <property type="evidence" value="ECO:0007669"/>
    <property type="project" value="UniProtKB-KW"/>
</dbReference>
<dbReference type="GO" id="GO:0006006">
    <property type="term" value="P:glucose metabolic process"/>
    <property type="evidence" value="ECO:0007669"/>
    <property type="project" value="UniProtKB-KW"/>
</dbReference>
<dbReference type="CDD" id="cd04367">
    <property type="entry name" value="IlGF_insulin_like"/>
    <property type="match status" value="1"/>
</dbReference>
<dbReference type="Gene3D" id="1.10.100.10">
    <property type="entry name" value="Insulin-like"/>
    <property type="match status" value="1"/>
</dbReference>
<dbReference type="InterPro" id="IPR004825">
    <property type="entry name" value="Insulin"/>
</dbReference>
<dbReference type="InterPro" id="IPR016179">
    <property type="entry name" value="Insulin-like"/>
</dbReference>
<dbReference type="InterPro" id="IPR036438">
    <property type="entry name" value="Insulin-like_sf"/>
</dbReference>
<dbReference type="InterPro" id="IPR022353">
    <property type="entry name" value="Insulin_CS"/>
</dbReference>
<dbReference type="InterPro" id="IPR022352">
    <property type="entry name" value="Insulin_family"/>
</dbReference>
<dbReference type="PANTHER" id="PTHR11454:SF9">
    <property type="entry name" value="INSULIN"/>
    <property type="match status" value="1"/>
</dbReference>
<dbReference type="PANTHER" id="PTHR11454">
    <property type="entry name" value="INSULIN/INSULIN GROWTH FACTOR"/>
    <property type="match status" value="1"/>
</dbReference>
<dbReference type="Pfam" id="PF00049">
    <property type="entry name" value="Insulin"/>
    <property type="match status" value="2"/>
</dbReference>
<dbReference type="PRINTS" id="PR00277">
    <property type="entry name" value="INSULIN"/>
</dbReference>
<dbReference type="PRINTS" id="PR00276">
    <property type="entry name" value="INSULINFAMLY"/>
</dbReference>
<dbReference type="SMART" id="SM00078">
    <property type="entry name" value="IlGF"/>
    <property type="match status" value="1"/>
</dbReference>
<dbReference type="SUPFAM" id="SSF56994">
    <property type="entry name" value="Insulin-like"/>
    <property type="match status" value="1"/>
</dbReference>
<dbReference type="PROSITE" id="PS00262">
    <property type="entry name" value="INSULIN"/>
    <property type="match status" value="1"/>
</dbReference>
<comment type="function">
    <text evidence="4">Insulin decreases blood glucose concentration. It increases cell permeability to monosaccharides, amino acids and fatty acids. It accelerates glycolysis, the pentose phosphate cycle, and glycogen synthesis in liver.</text>
</comment>
<comment type="subunit">
    <text evidence="1">Heterodimer of a B chain and an A chain linked by two disulfide bonds.</text>
</comment>
<comment type="subcellular location">
    <subcellularLocation>
        <location evidence="2">Secreted</location>
    </subcellularLocation>
</comment>
<comment type="similarity">
    <text evidence="4">Belongs to the insulin family.</text>
</comment>
<gene>
    <name evidence="4" type="primary">ins</name>
</gene>
<feature type="peptide" id="PRO_0000438534" description="Insulin B chain" evidence="2">
    <location>
        <begin position="1"/>
        <end position="30"/>
    </location>
</feature>
<feature type="peptide" id="PRO_0000438535" description="Insulin A chain" evidence="2">
    <location>
        <begin position="31"/>
        <end position="51"/>
    </location>
</feature>
<feature type="disulfide bond" description="Interchain (between B and A chains)" evidence="1">
    <location>
        <begin position="8"/>
        <end position="37"/>
    </location>
</feature>
<feature type="disulfide bond" description="Interchain (between B and A chains)" evidence="1">
    <location>
        <begin position="20"/>
        <end position="50"/>
    </location>
</feature>
<feature type="disulfide bond" evidence="1">
    <location>
        <begin position="36"/>
        <end position="41"/>
    </location>
</feature>
<feature type="non-consecutive residues" evidence="4">
    <location>
        <begin position="30"/>
        <end position="31"/>
    </location>
</feature>
<sequence>VAPPQHLCGSHLVDALYLVCGDRGFFYNPKGIVEQCCHKPCNIFDLQNYCN</sequence>
<reference evidence="4" key="1">
    <citation type="journal article" date="2016" name="Gen. Comp. Endocrinol.">
        <title>Development of a widely applicable immunoassay for insulin in marine teleosts that regulates cross-reactivity using biotinylation and inhibits interference by plasma components.</title>
        <authorList>
            <person name="Andoh T."/>
        </authorList>
    </citation>
    <scope>PROTEIN SEQUENCE</scope>
    <scope>SUBCELLULAR LOCATION</scope>
    <source>
        <tissue evidence="3">Endocrine gland</tissue>
    </source>
</reference>
<name>INS_SERQU</name>
<proteinExistence type="evidence at protein level"/>